<proteinExistence type="inferred from homology"/>
<name>EFTU_BURTA</name>
<reference key="1">
    <citation type="journal article" date="2005" name="BMC Genomics">
        <title>Bacterial genome adaptation to niches: divergence of the potential virulence genes in three Burkholderia species of different survival strategies.</title>
        <authorList>
            <person name="Kim H.S."/>
            <person name="Schell M.A."/>
            <person name="Yu Y."/>
            <person name="Ulrich R.L."/>
            <person name="Sarria S.H."/>
            <person name="Nierman W.C."/>
            <person name="DeShazer D."/>
        </authorList>
    </citation>
    <scope>NUCLEOTIDE SEQUENCE [LARGE SCALE GENOMIC DNA]</scope>
    <source>
        <strain>ATCC 700388 / DSM 13276 / CCUG 48851 / CIP 106301 / E264</strain>
    </source>
</reference>
<feature type="chain" id="PRO_0000337346" description="Elongation factor Tu">
    <location>
        <begin position="1"/>
        <end position="396"/>
    </location>
</feature>
<feature type="domain" description="tr-type G">
    <location>
        <begin position="10"/>
        <end position="206"/>
    </location>
</feature>
<feature type="region of interest" description="G1" evidence="1">
    <location>
        <begin position="19"/>
        <end position="26"/>
    </location>
</feature>
<feature type="region of interest" description="G2" evidence="1">
    <location>
        <begin position="60"/>
        <end position="64"/>
    </location>
</feature>
<feature type="region of interest" description="G3" evidence="1">
    <location>
        <begin position="81"/>
        <end position="84"/>
    </location>
</feature>
<feature type="region of interest" description="G4" evidence="1">
    <location>
        <begin position="136"/>
        <end position="139"/>
    </location>
</feature>
<feature type="region of interest" description="G5" evidence="1">
    <location>
        <begin position="174"/>
        <end position="176"/>
    </location>
</feature>
<feature type="binding site" evidence="2">
    <location>
        <begin position="19"/>
        <end position="26"/>
    </location>
    <ligand>
        <name>GTP</name>
        <dbReference type="ChEBI" id="CHEBI:37565"/>
    </ligand>
</feature>
<feature type="binding site" evidence="2">
    <location>
        <position position="26"/>
    </location>
    <ligand>
        <name>Mg(2+)</name>
        <dbReference type="ChEBI" id="CHEBI:18420"/>
    </ligand>
</feature>
<feature type="binding site" evidence="2">
    <location>
        <begin position="81"/>
        <end position="85"/>
    </location>
    <ligand>
        <name>GTP</name>
        <dbReference type="ChEBI" id="CHEBI:37565"/>
    </ligand>
</feature>
<feature type="binding site" evidence="2">
    <location>
        <begin position="136"/>
        <end position="139"/>
    </location>
    <ligand>
        <name>GTP</name>
        <dbReference type="ChEBI" id="CHEBI:37565"/>
    </ligand>
</feature>
<dbReference type="EC" id="3.6.5.3" evidence="2"/>
<dbReference type="EMBL" id="CP000086">
    <property type="protein sequence ID" value="ABC36629.1"/>
    <property type="molecule type" value="Genomic_DNA"/>
</dbReference>
<dbReference type="EMBL" id="CP000086">
    <property type="protein sequence ID" value="ABC39042.1"/>
    <property type="molecule type" value="Genomic_DNA"/>
</dbReference>
<dbReference type="SMR" id="Q2SU25"/>
<dbReference type="KEGG" id="bte:BTH_I3070"/>
<dbReference type="KEGG" id="bte:BTH_I3084"/>
<dbReference type="HOGENOM" id="CLU_007265_0_0_4"/>
<dbReference type="Proteomes" id="UP000001930">
    <property type="component" value="Chromosome I"/>
</dbReference>
<dbReference type="GO" id="GO:0005737">
    <property type="term" value="C:cytoplasm"/>
    <property type="evidence" value="ECO:0007669"/>
    <property type="project" value="UniProtKB-SubCell"/>
</dbReference>
<dbReference type="GO" id="GO:0005525">
    <property type="term" value="F:GTP binding"/>
    <property type="evidence" value="ECO:0007669"/>
    <property type="project" value="UniProtKB-UniRule"/>
</dbReference>
<dbReference type="GO" id="GO:0003924">
    <property type="term" value="F:GTPase activity"/>
    <property type="evidence" value="ECO:0007669"/>
    <property type="project" value="InterPro"/>
</dbReference>
<dbReference type="GO" id="GO:0097216">
    <property type="term" value="F:guanosine tetraphosphate binding"/>
    <property type="evidence" value="ECO:0007669"/>
    <property type="project" value="UniProtKB-ARBA"/>
</dbReference>
<dbReference type="GO" id="GO:0003746">
    <property type="term" value="F:translation elongation factor activity"/>
    <property type="evidence" value="ECO:0007669"/>
    <property type="project" value="UniProtKB-UniRule"/>
</dbReference>
<dbReference type="CDD" id="cd01884">
    <property type="entry name" value="EF_Tu"/>
    <property type="match status" value="1"/>
</dbReference>
<dbReference type="CDD" id="cd03697">
    <property type="entry name" value="EFTU_II"/>
    <property type="match status" value="1"/>
</dbReference>
<dbReference type="CDD" id="cd03707">
    <property type="entry name" value="EFTU_III"/>
    <property type="match status" value="1"/>
</dbReference>
<dbReference type="FunFam" id="2.40.30.10:FF:000001">
    <property type="entry name" value="Elongation factor Tu"/>
    <property type="match status" value="1"/>
</dbReference>
<dbReference type="FunFam" id="3.40.50.300:FF:000003">
    <property type="entry name" value="Elongation factor Tu"/>
    <property type="match status" value="1"/>
</dbReference>
<dbReference type="Gene3D" id="3.40.50.300">
    <property type="entry name" value="P-loop containing nucleotide triphosphate hydrolases"/>
    <property type="match status" value="1"/>
</dbReference>
<dbReference type="Gene3D" id="2.40.30.10">
    <property type="entry name" value="Translation factors"/>
    <property type="match status" value="2"/>
</dbReference>
<dbReference type="HAMAP" id="MF_00118_B">
    <property type="entry name" value="EF_Tu_B"/>
    <property type="match status" value="1"/>
</dbReference>
<dbReference type="InterPro" id="IPR041709">
    <property type="entry name" value="EF-Tu_GTP-bd"/>
</dbReference>
<dbReference type="InterPro" id="IPR050055">
    <property type="entry name" value="EF-Tu_GTPase"/>
</dbReference>
<dbReference type="InterPro" id="IPR004161">
    <property type="entry name" value="EFTu-like_2"/>
</dbReference>
<dbReference type="InterPro" id="IPR033720">
    <property type="entry name" value="EFTU_2"/>
</dbReference>
<dbReference type="InterPro" id="IPR031157">
    <property type="entry name" value="G_TR_CS"/>
</dbReference>
<dbReference type="InterPro" id="IPR027417">
    <property type="entry name" value="P-loop_NTPase"/>
</dbReference>
<dbReference type="InterPro" id="IPR005225">
    <property type="entry name" value="Small_GTP-bd"/>
</dbReference>
<dbReference type="InterPro" id="IPR000795">
    <property type="entry name" value="T_Tr_GTP-bd_dom"/>
</dbReference>
<dbReference type="InterPro" id="IPR009000">
    <property type="entry name" value="Transl_B-barrel_sf"/>
</dbReference>
<dbReference type="InterPro" id="IPR009001">
    <property type="entry name" value="Transl_elong_EF1A/Init_IF2_C"/>
</dbReference>
<dbReference type="InterPro" id="IPR004541">
    <property type="entry name" value="Transl_elong_EFTu/EF1A_bac/org"/>
</dbReference>
<dbReference type="InterPro" id="IPR004160">
    <property type="entry name" value="Transl_elong_EFTu/EF1A_C"/>
</dbReference>
<dbReference type="NCBIfam" id="TIGR00485">
    <property type="entry name" value="EF-Tu"/>
    <property type="match status" value="1"/>
</dbReference>
<dbReference type="NCBIfam" id="NF000766">
    <property type="entry name" value="PRK00049.1"/>
    <property type="match status" value="1"/>
</dbReference>
<dbReference type="NCBIfam" id="NF009372">
    <property type="entry name" value="PRK12735.1"/>
    <property type="match status" value="1"/>
</dbReference>
<dbReference type="NCBIfam" id="NF009373">
    <property type="entry name" value="PRK12736.1"/>
    <property type="match status" value="1"/>
</dbReference>
<dbReference type="NCBIfam" id="TIGR00231">
    <property type="entry name" value="small_GTP"/>
    <property type="match status" value="1"/>
</dbReference>
<dbReference type="PANTHER" id="PTHR43721:SF22">
    <property type="entry name" value="ELONGATION FACTOR TU, MITOCHONDRIAL"/>
    <property type="match status" value="1"/>
</dbReference>
<dbReference type="PANTHER" id="PTHR43721">
    <property type="entry name" value="ELONGATION FACTOR TU-RELATED"/>
    <property type="match status" value="1"/>
</dbReference>
<dbReference type="Pfam" id="PF00009">
    <property type="entry name" value="GTP_EFTU"/>
    <property type="match status" value="1"/>
</dbReference>
<dbReference type="Pfam" id="PF03144">
    <property type="entry name" value="GTP_EFTU_D2"/>
    <property type="match status" value="1"/>
</dbReference>
<dbReference type="Pfam" id="PF03143">
    <property type="entry name" value="GTP_EFTU_D3"/>
    <property type="match status" value="1"/>
</dbReference>
<dbReference type="PRINTS" id="PR00315">
    <property type="entry name" value="ELONGATNFCT"/>
</dbReference>
<dbReference type="SUPFAM" id="SSF50465">
    <property type="entry name" value="EF-Tu/eEF-1alpha/eIF2-gamma C-terminal domain"/>
    <property type="match status" value="1"/>
</dbReference>
<dbReference type="SUPFAM" id="SSF52540">
    <property type="entry name" value="P-loop containing nucleoside triphosphate hydrolases"/>
    <property type="match status" value="1"/>
</dbReference>
<dbReference type="SUPFAM" id="SSF50447">
    <property type="entry name" value="Translation proteins"/>
    <property type="match status" value="1"/>
</dbReference>
<dbReference type="PROSITE" id="PS00301">
    <property type="entry name" value="G_TR_1"/>
    <property type="match status" value="1"/>
</dbReference>
<dbReference type="PROSITE" id="PS51722">
    <property type="entry name" value="G_TR_2"/>
    <property type="match status" value="1"/>
</dbReference>
<gene>
    <name evidence="2" type="primary">tuf1</name>
    <name type="ordered locus">BTH_I3070</name>
</gene>
<gene>
    <name evidence="2" type="primary">tuf2</name>
    <name type="ordered locus">BTH_I3084</name>
</gene>
<keyword id="KW-0963">Cytoplasm</keyword>
<keyword id="KW-0251">Elongation factor</keyword>
<keyword id="KW-0342">GTP-binding</keyword>
<keyword id="KW-0378">Hydrolase</keyword>
<keyword id="KW-0460">Magnesium</keyword>
<keyword id="KW-0479">Metal-binding</keyword>
<keyword id="KW-0547">Nucleotide-binding</keyword>
<keyword id="KW-0648">Protein biosynthesis</keyword>
<evidence type="ECO:0000250" key="1"/>
<evidence type="ECO:0000255" key="2">
    <source>
        <dbReference type="HAMAP-Rule" id="MF_00118"/>
    </source>
</evidence>
<comment type="function">
    <text evidence="2">GTP hydrolase that promotes the GTP-dependent binding of aminoacyl-tRNA to the A-site of ribosomes during protein biosynthesis.</text>
</comment>
<comment type="catalytic activity">
    <reaction evidence="2">
        <text>GTP + H2O = GDP + phosphate + H(+)</text>
        <dbReference type="Rhea" id="RHEA:19669"/>
        <dbReference type="ChEBI" id="CHEBI:15377"/>
        <dbReference type="ChEBI" id="CHEBI:15378"/>
        <dbReference type="ChEBI" id="CHEBI:37565"/>
        <dbReference type="ChEBI" id="CHEBI:43474"/>
        <dbReference type="ChEBI" id="CHEBI:58189"/>
        <dbReference type="EC" id="3.6.5.3"/>
    </reaction>
    <physiologicalReaction direction="left-to-right" evidence="2">
        <dbReference type="Rhea" id="RHEA:19670"/>
    </physiologicalReaction>
</comment>
<comment type="subunit">
    <text evidence="2">Monomer.</text>
</comment>
<comment type="subcellular location">
    <subcellularLocation>
        <location evidence="2">Cytoplasm</location>
    </subcellularLocation>
</comment>
<comment type="similarity">
    <text evidence="2">Belongs to the TRAFAC class translation factor GTPase superfamily. Classic translation factor GTPase family. EF-Tu/EF-1A subfamily.</text>
</comment>
<protein>
    <recommendedName>
        <fullName evidence="2">Elongation factor Tu</fullName>
        <shortName evidence="2">EF-Tu</shortName>
        <ecNumber evidence="2">3.6.5.3</ecNumber>
    </recommendedName>
</protein>
<sequence>MAKEKFERTKPHVNVGTIGHVDHGKTTLTAAIATVLSAKFGGEAKKYDEIDAAPEEKARGITINTAHIEYETANRHYAHVDCPGHADYVKNMITGAAQMDGAILVCSAADGPMPQTREHILLARQVGVPYIIVFLNKCDMVDDAELLELVEMEVRELLSKYDFPGDDTPIIKGSAKLALEGDKGELGEVAIMNLADALDTYIPTPERAVDGAFLMPVEDVFSISGRGTVVTGRVERGVIKVGEEIEIVGIKATAKTTCTGVEMFRKLLDQGQAGDNVGILLRGTKREDVERGQVLAKPGSITPHTHFTAEVYVLSKDEGGRHTPFFNNYRPQFYFRTTDVTGSIELPKDKEMVMPGDNVSITVKLIAPIAMEEGLRFAIREGGRTVGAGVVAKIIE</sequence>
<organism>
    <name type="scientific">Burkholderia thailandensis (strain ATCC 700388 / DSM 13276 / CCUG 48851 / CIP 106301 / E264)</name>
    <dbReference type="NCBI Taxonomy" id="271848"/>
    <lineage>
        <taxon>Bacteria</taxon>
        <taxon>Pseudomonadati</taxon>
        <taxon>Pseudomonadota</taxon>
        <taxon>Betaproteobacteria</taxon>
        <taxon>Burkholderiales</taxon>
        <taxon>Burkholderiaceae</taxon>
        <taxon>Burkholderia</taxon>
        <taxon>pseudomallei group</taxon>
    </lineage>
</organism>
<accession>Q2SU25</accession>